<dbReference type="EC" id="3.6.1.-" evidence="1"/>
<dbReference type="EMBL" id="FM180568">
    <property type="protein sequence ID" value="CAS11604.1"/>
    <property type="molecule type" value="Genomic_DNA"/>
</dbReference>
<dbReference type="RefSeq" id="WP_001386504.1">
    <property type="nucleotide sequence ID" value="NC_011601.1"/>
</dbReference>
<dbReference type="SMR" id="B7UML1"/>
<dbReference type="KEGG" id="ecg:E2348C_4056"/>
<dbReference type="HOGENOM" id="CLU_018678_1_0_6"/>
<dbReference type="Proteomes" id="UP000008205">
    <property type="component" value="Chromosome"/>
</dbReference>
<dbReference type="GO" id="GO:0005737">
    <property type="term" value="C:cytoplasm"/>
    <property type="evidence" value="ECO:0007669"/>
    <property type="project" value="UniProtKB-SubCell"/>
</dbReference>
<dbReference type="GO" id="GO:0005524">
    <property type="term" value="F:ATP binding"/>
    <property type="evidence" value="ECO:0007669"/>
    <property type="project" value="UniProtKB-KW"/>
</dbReference>
<dbReference type="GO" id="GO:0016887">
    <property type="term" value="F:ATP hydrolysis activity"/>
    <property type="evidence" value="ECO:0007669"/>
    <property type="project" value="UniProtKB-UniRule"/>
</dbReference>
<dbReference type="CDD" id="cd00009">
    <property type="entry name" value="AAA"/>
    <property type="match status" value="1"/>
</dbReference>
<dbReference type="FunFam" id="3.40.50.300:FF:000410">
    <property type="entry name" value="ATPase RavA"/>
    <property type="match status" value="1"/>
</dbReference>
<dbReference type="Gene3D" id="1.20.58.1510">
    <property type="match status" value="1"/>
</dbReference>
<dbReference type="Gene3D" id="2.40.128.430">
    <property type="match status" value="1"/>
</dbReference>
<dbReference type="Gene3D" id="3.40.50.300">
    <property type="entry name" value="P-loop containing nucleotide triphosphate hydrolases"/>
    <property type="match status" value="1"/>
</dbReference>
<dbReference type="HAMAP" id="MF_01625">
    <property type="entry name" value="ATPase_RavA"/>
    <property type="match status" value="1"/>
</dbReference>
<dbReference type="InterPro" id="IPR003593">
    <property type="entry name" value="AAA+_ATPase"/>
</dbReference>
<dbReference type="InterPro" id="IPR023671">
    <property type="entry name" value="ATPase_RavA"/>
</dbReference>
<dbReference type="InterPro" id="IPR022547">
    <property type="entry name" value="ATPase_RavA_C"/>
</dbReference>
<dbReference type="InterPro" id="IPR045427">
    <property type="entry name" value="MoxR"/>
</dbReference>
<dbReference type="InterPro" id="IPR027417">
    <property type="entry name" value="P-loop_NTPase"/>
</dbReference>
<dbReference type="InterPro" id="IPR041538">
    <property type="entry name" value="RavA-like_AAA_lid"/>
</dbReference>
<dbReference type="InterPro" id="IPR050513">
    <property type="entry name" value="RavA_ATPases"/>
</dbReference>
<dbReference type="InterPro" id="IPR046898">
    <property type="entry name" value="RavA_LARA_dom"/>
</dbReference>
<dbReference type="InterPro" id="IPR046932">
    <property type="entry name" value="RavA_LARA_sf"/>
</dbReference>
<dbReference type="NCBIfam" id="NF010054">
    <property type="entry name" value="PRK13531.1"/>
    <property type="match status" value="1"/>
</dbReference>
<dbReference type="PANTHER" id="PTHR32204">
    <property type="entry name" value="ATPASE RAVA"/>
    <property type="match status" value="1"/>
</dbReference>
<dbReference type="PANTHER" id="PTHR32204:SF0">
    <property type="entry name" value="ATPASE RAVA"/>
    <property type="match status" value="1"/>
</dbReference>
<dbReference type="Pfam" id="PF17868">
    <property type="entry name" value="AAA_lid_8"/>
    <property type="match status" value="1"/>
</dbReference>
<dbReference type="Pfam" id="PF12592">
    <property type="entry name" value="ATPase_RavA_C"/>
    <property type="match status" value="1"/>
</dbReference>
<dbReference type="Pfam" id="PF20030">
    <property type="entry name" value="bpMoxR"/>
    <property type="match status" value="1"/>
</dbReference>
<dbReference type="Pfam" id="PF20265">
    <property type="entry name" value="LARA_dom"/>
    <property type="match status" value="1"/>
</dbReference>
<dbReference type="SMART" id="SM00382">
    <property type="entry name" value="AAA"/>
    <property type="match status" value="1"/>
</dbReference>
<dbReference type="SUPFAM" id="SSF52540">
    <property type="entry name" value="P-loop containing nucleoside triphosphate hydrolases"/>
    <property type="match status" value="1"/>
</dbReference>
<feature type="chain" id="PRO_1000186121" description="Regulatory ATPase RavA">
    <location>
        <begin position="1"/>
        <end position="498"/>
    </location>
</feature>
<feature type="binding site" evidence="1">
    <location>
        <position position="23"/>
    </location>
    <ligand>
        <name>ADP</name>
        <dbReference type="ChEBI" id="CHEBI:456216"/>
    </ligand>
</feature>
<feature type="binding site" evidence="1">
    <location>
        <position position="49"/>
    </location>
    <ligand>
        <name>ADP</name>
        <dbReference type="ChEBI" id="CHEBI:456216"/>
    </ligand>
</feature>
<feature type="binding site" evidence="1">
    <location>
        <position position="50"/>
    </location>
    <ligand>
        <name>ADP</name>
        <dbReference type="ChEBI" id="CHEBI:456216"/>
    </ligand>
</feature>
<feature type="binding site" evidence="1">
    <location>
        <position position="51"/>
    </location>
    <ligand>
        <name>ADP</name>
        <dbReference type="ChEBI" id="CHEBI:456216"/>
    </ligand>
</feature>
<feature type="binding site" evidence="1">
    <location>
        <position position="52"/>
    </location>
    <ligand>
        <name>ADP</name>
        <dbReference type="ChEBI" id="CHEBI:456216"/>
    </ligand>
</feature>
<feature type="binding site" evidence="1">
    <location>
        <position position="53"/>
    </location>
    <ligand>
        <name>ADP</name>
        <dbReference type="ChEBI" id="CHEBI:456216"/>
    </ligand>
</feature>
<feature type="binding site" evidence="1">
    <location>
        <position position="54"/>
    </location>
    <ligand>
        <name>ADP</name>
        <dbReference type="ChEBI" id="CHEBI:456216"/>
    </ligand>
</feature>
<feature type="binding site" evidence="1">
    <location>
        <position position="196"/>
    </location>
    <ligand>
        <name>ADP</name>
        <dbReference type="ChEBI" id="CHEBI:456216"/>
    </ligand>
</feature>
<comment type="function">
    <text evidence="1">Component of the RavA-ViaA chaperone complex, which may act on the membrane to optimize the function of some of the respiratory chains. RavA functions as an ATPase.</text>
</comment>
<comment type="catalytic activity">
    <reaction evidence="1">
        <text>ATP + H2O = ADP + phosphate + H(+)</text>
        <dbReference type="Rhea" id="RHEA:13065"/>
        <dbReference type="ChEBI" id="CHEBI:15377"/>
        <dbReference type="ChEBI" id="CHEBI:15378"/>
        <dbReference type="ChEBI" id="CHEBI:30616"/>
        <dbReference type="ChEBI" id="CHEBI:43474"/>
        <dbReference type="ChEBI" id="CHEBI:456216"/>
    </reaction>
</comment>
<comment type="activity regulation">
    <text evidence="1">ATPase activity is stimulated by ViaA.</text>
</comment>
<comment type="subunit">
    <text evidence="1">Homohexamer. Interacts with ViaA.</text>
</comment>
<comment type="subcellular location">
    <subcellularLocation>
        <location evidence="1">Cytoplasm</location>
    </subcellularLocation>
</comment>
<comment type="similarity">
    <text evidence="1">Belongs to the RavA family.</text>
</comment>
<accession>B7UML1</accession>
<gene>
    <name evidence="1" type="primary">ravA</name>
    <name type="ordered locus">E2348C_4056</name>
</gene>
<organism>
    <name type="scientific">Escherichia coli O127:H6 (strain E2348/69 / EPEC)</name>
    <dbReference type="NCBI Taxonomy" id="574521"/>
    <lineage>
        <taxon>Bacteria</taxon>
        <taxon>Pseudomonadati</taxon>
        <taxon>Pseudomonadota</taxon>
        <taxon>Gammaproteobacteria</taxon>
        <taxon>Enterobacterales</taxon>
        <taxon>Enterobacteriaceae</taxon>
        <taxon>Escherichia</taxon>
    </lineage>
</organism>
<keyword id="KW-0067">ATP-binding</keyword>
<keyword id="KW-0143">Chaperone</keyword>
<keyword id="KW-0963">Cytoplasm</keyword>
<keyword id="KW-0378">Hydrolase</keyword>
<keyword id="KW-0547">Nucleotide-binding</keyword>
<keyword id="KW-1185">Reference proteome</keyword>
<sequence length="498" mass="56409">MAHPHLLAERISRLSSSLEKGLYERSHAIRLCLLAALSGESVFLLGPPGIAKSLIARRLKFAFQNARAFEYLMTRFSTPEEVFGPLSIQALKDEGRYERLTSGYLPEAEIVFLDEIWKAGPAILNTLLTAINERQFRNGALVEKIPMRLLVAASNELPEADSSLEALYDRMLIRLWLDKVQDKANFRSMLTSQQDENDNPVPASLQITDEEYERWQKEIGEITLPDHVFELIFMLRQQLDKLPDAPYVSDRRWKKAIRLLQASAFFSGRSAVAPVDLILLKDCLWYDAQSLNLIQQQIDVLMTGHAWQQQGMLTRLGAIVQRHLQLQQQQSDKTALTVIRLGGIFSRRQQYQLPVNVTASTLTLLLQKPLKLHDMEVVHISFERSALEQWLSKGGEIRGKLNGIGFAQKLNLEVDSAQHLVVRDVSLQGSTLALPGSSAEGLPSEIKQQLEELESDWRKQHVLFSEQQKCLFIPGDWLGRIEASLQDVGAQIRQAQQC</sequence>
<proteinExistence type="inferred from homology"/>
<protein>
    <recommendedName>
        <fullName evidence="1">Regulatory ATPase RavA</fullName>
        <ecNumber evidence="1">3.6.1.-</ecNumber>
    </recommendedName>
    <alternativeName>
        <fullName evidence="1">Regulatory ATPase variant A</fullName>
    </alternativeName>
</protein>
<evidence type="ECO:0000255" key="1">
    <source>
        <dbReference type="HAMAP-Rule" id="MF_01625"/>
    </source>
</evidence>
<reference key="1">
    <citation type="journal article" date="2009" name="J. Bacteriol.">
        <title>Complete genome sequence and comparative genome analysis of enteropathogenic Escherichia coli O127:H6 strain E2348/69.</title>
        <authorList>
            <person name="Iguchi A."/>
            <person name="Thomson N.R."/>
            <person name="Ogura Y."/>
            <person name="Saunders D."/>
            <person name="Ooka T."/>
            <person name="Henderson I.R."/>
            <person name="Harris D."/>
            <person name="Asadulghani M."/>
            <person name="Kurokawa K."/>
            <person name="Dean P."/>
            <person name="Kenny B."/>
            <person name="Quail M.A."/>
            <person name="Thurston S."/>
            <person name="Dougan G."/>
            <person name="Hayashi T."/>
            <person name="Parkhill J."/>
            <person name="Frankel G."/>
        </authorList>
    </citation>
    <scope>NUCLEOTIDE SEQUENCE [LARGE SCALE GENOMIC DNA]</scope>
    <source>
        <strain>E2348/69 / EPEC</strain>
    </source>
</reference>
<name>RAVA_ECO27</name>